<evidence type="ECO:0000255" key="1">
    <source>
        <dbReference type="HAMAP-Rule" id="MF_01341"/>
    </source>
</evidence>
<evidence type="ECO:0000256" key="2">
    <source>
        <dbReference type="SAM" id="MobiDB-lite"/>
    </source>
</evidence>
<evidence type="ECO:0000305" key="3"/>
<sequence length="148" mass="16317">MQLHNLEYKKGSRNHKEKRVGRGHGSGLGKTSGRGQDGQKARKSGMVRLAFEGGQTPLYRRVPKVGFNNDRFANKYNVVTLISLVKYETKELTVEFMYANKIAKNEDLPIKVIGNAVLPSGTVVSAHKFSKGALESISNSKAKAQILE</sequence>
<keyword id="KW-1185">Reference proteome</keyword>
<keyword id="KW-0687">Ribonucleoprotein</keyword>
<keyword id="KW-0689">Ribosomal protein</keyword>
<keyword id="KW-0694">RNA-binding</keyword>
<keyword id="KW-0699">rRNA-binding</keyword>
<accession>Q9PQP2</accession>
<feature type="chain" id="PRO_0000251582" description="Large ribosomal subunit protein uL15">
    <location>
        <begin position="1"/>
        <end position="148"/>
    </location>
</feature>
<feature type="region of interest" description="Disordered" evidence="2">
    <location>
        <begin position="1"/>
        <end position="42"/>
    </location>
</feature>
<feature type="compositionally biased region" description="Basic and acidic residues" evidence="2">
    <location>
        <begin position="1"/>
        <end position="10"/>
    </location>
</feature>
<feature type="compositionally biased region" description="Basic residues" evidence="2">
    <location>
        <begin position="11"/>
        <end position="22"/>
    </location>
</feature>
<feature type="compositionally biased region" description="Gly residues" evidence="2">
    <location>
        <begin position="23"/>
        <end position="36"/>
    </location>
</feature>
<gene>
    <name evidence="1" type="primary">rplO</name>
    <name type="ordered locus">UU249</name>
</gene>
<organism>
    <name type="scientific">Ureaplasma parvum serovar 3 (strain ATCC 700970)</name>
    <dbReference type="NCBI Taxonomy" id="273119"/>
    <lineage>
        <taxon>Bacteria</taxon>
        <taxon>Bacillati</taxon>
        <taxon>Mycoplasmatota</taxon>
        <taxon>Mycoplasmoidales</taxon>
        <taxon>Mycoplasmoidaceae</taxon>
        <taxon>Ureaplasma</taxon>
    </lineage>
</organism>
<name>RL15_UREPA</name>
<proteinExistence type="inferred from homology"/>
<protein>
    <recommendedName>
        <fullName evidence="1">Large ribosomal subunit protein uL15</fullName>
    </recommendedName>
    <alternativeName>
        <fullName evidence="3">50S ribosomal protein L15</fullName>
    </alternativeName>
</protein>
<comment type="function">
    <text evidence="1">Binds to the 23S rRNA.</text>
</comment>
<comment type="subunit">
    <text evidence="1">Part of the 50S ribosomal subunit.</text>
</comment>
<comment type="similarity">
    <text evidence="1">Belongs to the universal ribosomal protein uL15 family.</text>
</comment>
<reference key="1">
    <citation type="journal article" date="2000" name="Nature">
        <title>The complete sequence of the mucosal pathogen Ureaplasma urealyticum.</title>
        <authorList>
            <person name="Glass J.I."/>
            <person name="Lefkowitz E.J."/>
            <person name="Glass J.S."/>
            <person name="Heiner C.R."/>
            <person name="Chen E.Y."/>
            <person name="Cassell G.H."/>
        </authorList>
    </citation>
    <scope>NUCLEOTIDE SEQUENCE [LARGE SCALE GENOMIC DNA]</scope>
    <source>
        <strain>ATCC 700970</strain>
    </source>
</reference>
<dbReference type="EMBL" id="AF222894">
    <property type="protein sequence ID" value="AAF30658.1"/>
    <property type="molecule type" value="Genomic_DNA"/>
</dbReference>
<dbReference type="RefSeq" id="WP_006688932.1">
    <property type="nucleotide sequence ID" value="NC_002162.1"/>
</dbReference>
<dbReference type="SMR" id="Q9PQP2"/>
<dbReference type="STRING" id="273119.UU249"/>
<dbReference type="EnsemblBacteria" id="AAF30658">
    <property type="protein sequence ID" value="AAF30658"/>
    <property type="gene ID" value="UU249"/>
</dbReference>
<dbReference type="GeneID" id="29672629"/>
<dbReference type="KEGG" id="uur:UU249"/>
<dbReference type="eggNOG" id="COG0200">
    <property type="taxonomic scope" value="Bacteria"/>
</dbReference>
<dbReference type="HOGENOM" id="CLU_055188_4_2_14"/>
<dbReference type="OrthoDB" id="9810293at2"/>
<dbReference type="Proteomes" id="UP000000423">
    <property type="component" value="Chromosome"/>
</dbReference>
<dbReference type="GO" id="GO:0022625">
    <property type="term" value="C:cytosolic large ribosomal subunit"/>
    <property type="evidence" value="ECO:0007669"/>
    <property type="project" value="TreeGrafter"/>
</dbReference>
<dbReference type="GO" id="GO:0019843">
    <property type="term" value="F:rRNA binding"/>
    <property type="evidence" value="ECO:0007669"/>
    <property type="project" value="UniProtKB-UniRule"/>
</dbReference>
<dbReference type="GO" id="GO:0003735">
    <property type="term" value="F:structural constituent of ribosome"/>
    <property type="evidence" value="ECO:0007669"/>
    <property type="project" value="InterPro"/>
</dbReference>
<dbReference type="GO" id="GO:0006412">
    <property type="term" value="P:translation"/>
    <property type="evidence" value="ECO:0007669"/>
    <property type="project" value="UniProtKB-UniRule"/>
</dbReference>
<dbReference type="Gene3D" id="3.100.10.10">
    <property type="match status" value="1"/>
</dbReference>
<dbReference type="HAMAP" id="MF_01341">
    <property type="entry name" value="Ribosomal_uL15"/>
    <property type="match status" value="1"/>
</dbReference>
<dbReference type="InterPro" id="IPR030878">
    <property type="entry name" value="Ribosomal_uL15"/>
</dbReference>
<dbReference type="InterPro" id="IPR021131">
    <property type="entry name" value="Ribosomal_uL15/eL18"/>
</dbReference>
<dbReference type="InterPro" id="IPR036227">
    <property type="entry name" value="Ribosomal_uL15/eL18_sf"/>
</dbReference>
<dbReference type="InterPro" id="IPR005749">
    <property type="entry name" value="Ribosomal_uL15_bac-type"/>
</dbReference>
<dbReference type="NCBIfam" id="TIGR01071">
    <property type="entry name" value="rplO_bact"/>
    <property type="match status" value="1"/>
</dbReference>
<dbReference type="PANTHER" id="PTHR12934">
    <property type="entry name" value="50S RIBOSOMAL PROTEIN L15"/>
    <property type="match status" value="1"/>
</dbReference>
<dbReference type="PANTHER" id="PTHR12934:SF11">
    <property type="entry name" value="LARGE RIBOSOMAL SUBUNIT PROTEIN UL15M"/>
    <property type="match status" value="1"/>
</dbReference>
<dbReference type="Pfam" id="PF00828">
    <property type="entry name" value="Ribosomal_L27A"/>
    <property type="match status" value="1"/>
</dbReference>
<dbReference type="SUPFAM" id="SSF52080">
    <property type="entry name" value="Ribosomal proteins L15p and L18e"/>
    <property type="match status" value="1"/>
</dbReference>